<evidence type="ECO:0000255" key="1">
    <source>
        <dbReference type="HAMAP-Rule" id="MF_00178"/>
    </source>
</evidence>
<feature type="chain" id="PRO_1000040528" description="6,7-dimethyl-8-ribityllumazine synthase">
    <location>
        <begin position="1"/>
        <end position="155"/>
    </location>
</feature>
<feature type="active site" description="Proton donor" evidence="1">
    <location>
        <position position="88"/>
    </location>
</feature>
<feature type="binding site" evidence="1">
    <location>
        <position position="22"/>
    </location>
    <ligand>
        <name>5-amino-6-(D-ribitylamino)uracil</name>
        <dbReference type="ChEBI" id="CHEBI:15934"/>
    </ligand>
</feature>
<feature type="binding site" evidence="1">
    <location>
        <begin position="56"/>
        <end position="58"/>
    </location>
    <ligand>
        <name>5-amino-6-(D-ribitylamino)uracil</name>
        <dbReference type="ChEBI" id="CHEBI:15934"/>
    </ligand>
</feature>
<feature type="binding site" evidence="1">
    <location>
        <begin position="80"/>
        <end position="82"/>
    </location>
    <ligand>
        <name>5-amino-6-(D-ribitylamino)uracil</name>
        <dbReference type="ChEBI" id="CHEBI:15934"/>
    </ligand>
</feature>
<feature type="binding site" evidence="1">
    <location>
        <begin position="85"/>
        <end position="86"/>
    </location>
    <ligand>
        <name>(2S)-2-hydroxy-3-oxobutyl phosphate</name>
        <dbReference type="ChEBI" id="CHEBI:58830"/>
    </ligand>
</feature>
<feature type="binding site" evidence="1">
    <location>
        <position position="113"/>
    </location>
    <ligand>
        <name>5-amino-6-(D-ribitylamino)uracil</name>
        <dbReference type="ChEBI" id="CHEBI:15934"/>
    </ligand>
</feature>
<feature type="binding site" evidence="1">
    <location>
        <position position="127"/>
    </location>
    <ligand>
        <name>(2S)-2-hydroxy-3-oxobutyl phosphate</name>
        <dbReference type="ChEBI" id="CHEBI:58830"/>
    </ligand>
</feature>
<organism>
    <name type="scientific">Streptococcus pneumoniae serotype 2 (strain D39 / NCTC 7466)</name>
    <dbReference type="NCBI Taxonomy" id="373153"/>
    <lineage>
        <taxon>Bacteria</taxon>
        <taxon>Bacillati</taxon>
        <taxon>Bacillota</taxon>
        <taxon>Bacilli</taxon>
        <taxon>Lactobacillales</taxon>
        <taxon>Streptococcaceae</taxon>
        <taxon>Streptococcus</taxon>
    </lineage>
</organism>
<dbReference type="EC" id="2.5.1.78" evidence="1"/>
<dbReference type="EMBL" id="CP000410">
    <property type="protein sequence ID" value="ABJ55434.1"/>
    <property type="molecule type" value="Genomic_DNA"/>
</dbReference>
<dbReference type="SMR" id="Q04MR3"/>
<dbReference type="PaxDb" id="373153-SPD_0166"/>
<dbReference type="KEGG" id="spd:SPD_0166"/>
<dbReference type="eggNOG" id="COG0054">
    <property type="taxonomic scope" value="Bacteria"/>
</dbReference>
<dbReference type="HOGENOM" id="CLU_089358_1_1_9"/>
<dbReference type="BioCyc" id="SPNE373153:G1G6V-185-MONOMER"/>
<dbReference type="UniPathway" id="UPA00275">
    <property type="reaction ID" value="UER00404"/>
</dbReference>
<dbReference type="Proteomes" id="UP000001452">
    <property type="component" value="Chromosome"/>
</dbReference>
<dbReference type="GO" id="GO:0005829">
    <property type="term" value="C:cytosol"/>
    <property type="evidence" value="ECO:0007669"/>
    <property type="project" value="TreeGrafter"/>
</dbReference>
<dbReference type="GO" id="GO:0009349">
    <property type="term" value="C:riboflavin synthase complex"/>
    <property type="evidence" value="ECO:0007669"/>
    <property type="project" value="InterPro"/>
</dbReference>
<dbReference type="GO" id="GO:0000906">
    <property type="term" value="F:6,7-dimethyl-8-ribityllumazine synthase activity"/>
    <property type="evidence" value="ECO:0007669"/>
    <property type="project" value="UniProtKB-UniRule"/>
</dbReference>
<dbReference type="GO" id="GO:0009231">
    <property type="term" value="P:riboflavin biosynthetic process"/>
    <property type="evidence" value="ECO:0007669"/>
    <property type="project" value="UniProtKB-UniRule"/>
</dbReference>
<dbReference type="CDD" id="cd09209">
    <property type="entry name" value="Lumazine_synthase-I"/>
    <property type="match status" value="1"/>
</dbReference>
<dbReference type="FunFam" id="3.40.50.960:FF:000001">
    <property type="entry name" value="6,7-dimethyl-8-ribityllumazine synthase"/>
    <property type="match status" value="1"/>
</dbReference>
<dbReference type="Gene3D" id="3.40.50.960">
    <property type="entry name" value="Lumazine/riboflavin synthase"/>
    <property type="match status" value="1"/>
</dbReference>
<dbReference type="HAMAP" id="MF_00178">
    <property type="entry name" value="Lumazine_synth"/>
    <property type="match status" value="1"/>
</dbReference>
<dbReference type="InterPro" id="IPR034964">
    <property type="entry name" value="LS"/>
</dbReference>
<dbReference type="InterPro" id="IPR002180">
    <property type="entry name" value="LS/RS"/>
</dbReference>
<dbReference type="InterPro" id="IPR036467">
    <property type="entry name" value="LS/RS_sf"/>
</dbReference>
<dbReference type="NCBIfam" id="TIGR00114">
    <property type="entry name" value="lumazine-synth"/>
    <property type="match status" value="1"/>
</dbReference>
<dbReference type="NCBIfam" id="NF000812">
    <property type="entry name" value="PRK00061.1-4"/>
    <property type="match status" value="1"/>
</dbReference>
<dbReference type="PANTHER" id="PTHR21058:SF0">
    <property type="entry name" value="6,7-DIMETHYL-8-RIBITYLLUMAZINE SYNTHASE"/>
    <property type="match status" value="1"/>
</dbReference>
<dbReference type="PANTHER" id="PTHR21058">
    <property type="entry name" value="6,7-DIMETHYL-8-RIBITYLLUMAZINE SYNTHASE DMRL SYNTHASE LUMAZINE SYNTHASE"/>
    <property type="match status" value="1"/>
</dbReference>
<dbReference type="Pfam" id="PF00885">
    <property type="entry name" value="DMRL_synthase"/>
    <property type="match status" value="1"/>
</dbReference>
<dbReference type="SUPFAM" id="SSF52121">
    <property type="entry name" value="Lumazine synthase"/>
    <property type="match status" value="1"/>
</dbReference>
<accession>Q04MR3</accession>
<name>RISB_STRP2</name>
<protein>
    <recommendedName>
        <fullName evidence="1">6,7-dimethyl-8-ribityllumazine synthase</fullName>
        <shortName evidence="1">DMRL synthase</shortName>
        <shortName evidence="1">LS</shortName>
        <shortName evidence="1">Lumazine synthase</shortName>
        <ecNumber evidence="1">2.5.1.78</ecNumber>
    </recommendedName>
</protein>
<sequence>MNTYEGNLVANNIKIGIVVARFNEFITSKLLSGALDNLKRENVNEKDIEVAWVPGAFEIPLIASKMAKSKKYDAIICLGAVIRGNTSHYDYVCSEVSKGIAQISLNSEIPVMFGVLTTDTIEQAIERAGTKAGNKGSECAQGAIEMVNLIRTLDA</sequence>
<proteinExistence type="inferred from homology"/>
<gene>
    <name evidence="1" type="primary">ribH</name>
    <name type="ordered locus">SPD_0166</name>
</gene>
<comment type="function">
    <text evidence="1">Catalyzes the formation of 6,7-dimethyl-8-ribityllumazine by condensation of 5-amino-6-(D-ribitylamino)uracil with 3,4-dihydroxy-2-butanone 4-phosphate. This is the penultimate step in the biosynthesis of riboflavin.</text>
</comment>
<comment type="catalytic activity">
    <reaction evidence="1">
        <text>(2S)-2-hydroxy-3-oxobutyl phosphate + 5-amino-6-(D-ribitylamino)uracil = 6,7-dimethyl-8-(1-D-ribityl)lumazine + phosphate + 2 H2O + H(+)</text>
        <dbReference type="Rhea" id="RHEA:26152"/>
        <dbReference type="ChEBI" id="CHEBI:15377"/>
        <dbReference type="ChEBI" id="CHEBI:15378"/>
        <dbReference type="ChEBI" id="CHEBI:15934"/>
        <dbReference type="ChEBI" id="CHEBI:43474"/>
        <dbReference type="ChEBI" id="CHEBI:58201"/>
        <dbReference type="ChEBI" id="CHEBI:58830"/>
        <dbReference type="EC" id="2.5.1.78"/>
    </reaction>
</comment>
<comment type="pathway">
    <text evidence="1">Cofactor biosynthesis; riboflavin biosynthesis; riboflavin from 2-hydroxy-3-oxobutyl phosphate and 5-amino-6-(D-ribitylamino)uracil: step 1/2.</text>
</comment>
<comment type="similarity">
    <text evidence="1">Belongs to the DMRL synthase family.</text>
</comment>
<keyword id="KW-1185">Reference proteome</keyword>
<keyword id="KW-0686">Riboflavin biosynthesis</keyword>
<keyword id="KW-0808">Transferase</keyword>
<reference key="1">
    <citation type="journal article" date="2007" name="J. Bacteriol.">
        <title>Genome sequence of Avery's virulent serotype 2 strain D39 of Streptococcus pneumoniae and comparison with that of unencapsulated laboratory strain R6.</title>
        <authorList>
            <person name="Lanie J.A."/>
            <person name="Ng W.-L."/>
            <person name="Kazmierczak K.M."/>
            <person name="Andrzejewski T.M."/>
            <person name="Davidsen T.M."/>
            <person name="Wayne K.J."/>
            <person name="Tettelin H."/>
            <person name="Glass J.I."/>
            <person name="Winkler M.E."/>
        </authorList>
    </citation>
    <scope>NUCLEOTIDE SEQUENCE [LARGE SCALE GENOMIC DNA]</scope>
    <source>
        <strain>D39 / NCTC 7466</strain>
    </source>
</reference>